<name>P3IP1_RAT</name>
<protein>
    <recommendedName>
        <fullName>Phosphoinositide-3-kinase-interacting protein 1</fullName>
    </recommendedName>
    <alternativeName>
        <fullName>Kringle domain-containing protein HGFL</fullName>
    </alternativeName>
</protein>
<proteinExistence type="evidence at transcript level"/>
<feature type="signal peptide" evidence="1">
    <location>
        <begin position="1"/>
        <end position="21"/>
    </location>
</feature>
<feature type="chain" id="PRO_0000280350" description="Phosphoinositide-3-kinase-interacting protein 1">
    <location>
        <begin position="22"/>
        <end position="267"/>
    </location>
</feature>
<feature type="topological domain" description="Extracellular" evidence="4">
    <location>
        <begin position="22"/>
        <end position="172"/>
    </location>
</feature>
<feature type="transmembrane region" description="Helical" evidence="4">
    <location>
        <begin position="173"/>
        <end position="193"/>
    </location>
</feature>
<feature type="topological domain" description="Cytoplasmic" evidence="4">
    <location>
        <begin position="194"/>
        <end position="267"/>
    </location>
</feature>
<feature type="domain" description="Kringle" evidence="5">
    <location>
        <begin position="24"/>
        <end position="101"/>
    </location>
</feature>
<feature type="region of interest" description="Disordered" evidence="6">
    <location>
        <begin position="91"/>
        <end position="122"/>
    </location>
</feature>
<feature type="compositionally biased region" description="Basic and acidic residues" evidence="6">
    <location>
        <begin position="91"/>
        <end position="101"/>
    </location>
</feature>
<feature type="disulfide bond" evidence="5">
    <location>
        <begin position="25"/>
        <end position="101"/>
    </location>
</feature>
<feature type="disulfide bond" evidence="5">
    <location>
        <begin position="46"/>
        <end position="82"/>
    </location>
</feature>
<feature type="disulfide bond" evidence="5">
    <location>
        <begin position="70"/>
        <end position="96"/>
    </location>
</feature>
<accession>Q56A20</accession>
<reference key="1">
    <citation type="journal article" date="2004" name="Nature">
        <title>Genome sequence of the Brown Norway rat yields insights into mammalian evolution.</title>
        <authorList>
            <person name="Gibbs R.A."/>
            <person name="Weinstock G.M."/>
            <person name="Metzker M.L."/>
            <person name="Muzny D.M."/>
            <person name="Sodergren E.J."/>
            <person name="Scherer S."/>
            <person name="Scott G."/>
            <person name="Steffen D."/>
            <person name="Worley K.C."/>
            <person name="Burch P.E."/>
            <person name="Okwuonu G."/>
            <person name="Hines S."/>
            <person name="Lewis L."/>
            <person name="Deramo C."/>
            <person name="Delgado O."/>
            <person name="Dugan-Rocha S."/>
            <person name="Miner G."/>
            <person name="Morgan M."/>
            <person name="Hawes A."/>
            <person name="Gill R."/>
            <person name="Holt R.A."/>
            <person name="Adams M.D."/>
            <person name="Amanatides P.G."/>
            <person name="Baden-Tillson H."/>
            <person name="Barnstead M."/>
            <person name="Chin S."/>
            <person name="Evans C.A."/>
            <person name="Ferriera S."/>
            <person name="Fosler C."/>
            <person name="Glodek A."/>
            <person name="Gu Z."/>
            <person name="Jennings D."/>
            <person name="Kraft C.L."/>
            <person name="Nguyen T."/>
            <person name="Pfannkoch C.M."/>
            <person name="Sitter C."/>
            <person name="Sutton G.G."/>
            <person name="Venter J.C."/>
            <person name="Woodage T."/>
            <person name="Smith D."/>
            <person name="Lee H.-M."/>
            <person name="Gustafson E."/>
            <person name="Cahill P."/>
            <person name="Kana A."/>
            <person name="Doucette-Stamm L."/>
            <person name="Weinstock K."/>
            <person name="Fechtel K."/>
            <person name="Weiss R.B."/>
            <person name="Dunn D.M."/>
            <person name="Green E.D."/>
            <person name="Blakesley R.W."/>
            <person name="Bouffard G.G."/>
            <person name="De Jong P.J."/>
            <person name="Osoegawa K."/>
            <person name="Zhu B."/>
            <person name="Marra M."/>
            <person name="Schein J."/>
            <person name="Bosdet I."/>
            <person name="Fjell C."/>
            <person name="Jones S."/>
            <person name="Krzywinski M."/>
            <person name="Mathewson C."/>
            <person name="Siddiqui A."/>
            <person name="Wye N."/>
            <person name="McPherson J."/>
            <person name="Zhao S."/>
            <person name="Fraser C.M."/>
            <person name="Shetty J."/>
            <person name="Shatsman S."/>
            <person name="Geer K."/>
            <person name="Chen Y."/>
            <person name="Abramzon S."/>
            <person name="Nierman W.C."/>
            <person name="Havlak P.H."/>
            <person name="Chen R."/>
            <person name="Durbin K.J."/>
            <person name="Egan A."/>
            <person name="Ren Y."/>
            <person name="Song X.-Z."/>
            <person name="Li B."/>
            <person name="Liu Y."/>
            <person name="Qin X."/>
            <person name="Cawley S."/>
            <person name="Cooney A.J."/>
            <person name="D'Souza L.M."/>
            <person name="Martin K."/>
            <person name="Wu J.Q."/>
            <person name="Gonzalez-Garay M.L."/>
            <person name="Jackson A.R."/>
            <person name="Kalafus K.J."/>
            <person name="McLeod M.P."/>
            <person name="Milosavljevic A."/>
            <person name="Virk D."/>
            <person name="Volkov A."/>
            <person name="Wheeler D.A."/>
            <person name="Zhang Z."/>
            <person name="Bailey J.A."/>
            <person name="Eichler E.E."/>
            <person name="Tuzun E."/>
            <person name="Birney E."/>
            <person name="Mongin E."/>
            <person name="Ureta-Vidal A."/>
            <person name="Woodwark C."/>
            <person name="Zdobnov E."/>
            <person name="Bork P."/>
            <person name="Suyama M."/>
            <person name="Torrents D."/>
            <person name="Alexandersson M."/>
            <person name="Trask B.J."/>
            <person name="Young J.M."/>
            <person name="Huang H."/>
            <person name="Wang H."/>
            <person name="Xing H."/>
            <person name="Daniels S."/>
            <person name="Gietzen D."/>
            <person name="Schmidt J."/>
            <person name="Stevens K."/>
            <person name="Vitt U."/>
            <person name="Wingrove J."/>
            <person name="Camara F."/>
            <person name="Mar Alba M."/>
            <person name="Abril J.F."/>
            <person name="Guigo R."/>
            <person name="Smit A."/>
            <person name="Dubchak I."/>
            <person name="Rubin E.M."/>
            <person name="Couronne O."/>
            <person name="Poliakov A."/>
            <person name="Huebner N."/>
            <person name="Ganten D."/>
            <person name="Goesele C."/>
            <person name="Hummel O."/>
            <person name="Kreitler T."/>
            <person name="Lee Y.-A."/>
            <person name="Monti J."/>
            <person name="Schulz H."/>
            <person name="Zimdahl H."/>
            <person name="Himmelbauer H."/>
            <person name="Lehrach H."/>
            <person name="Jacob H.J."/>
            <person name="Bromberg S."/>
            <person name="Gullings-Handley J."/>
            <person name="Jensen-Seaman M.I."/>
            <person name="Kwitek A.E."/>
            <person name="Lazar J."/>
            <person name="Pasko D."/>
            <person name="Tonellato P.J."/>
            <person name="Twigger S."/>
            <person name="Ponting C.P."/>
            <person name="Duarte J.M."/>
            <person name="Rice S."/>
            <person name="Goodstadt L."/>
            <person name="Beatson S.A."/>
            <person name="Emes R.D."/>
            <person name="Winter E.E."/>
            <person name="Webber C."/>
            <person name="Brandt P."/>
            <person name="Nyakatura G."/>
            <person name="Adetobi M."/>
            <person name="Chiaromonte F."/>
            <person name="Elnitski L."/>
            <person name="Eswara P."/>
            <person name="Hardison R.C."/>
            <person name="Hou M."/>
            <person name="Kolbe D."/>
            <person name="Makova K."/>
            <person name="Miller W."/>
            <person name="Nekrutenko A."/>
            <person name="Riemer C."/>
            <person name="Schwartz S."/>
            <person name="Taylor J."/>
            <person name="Yang S."/>
            <person name="Zhang Y."/>
            <person name="Lindpaintner K."/>
            <person name="Andrews T.D."/>
            <person name="Caccamo M."/>
            <person name="Clamp M."/>
            <person name="Clarke L."/>
            <person name="Curwen V."/>
            <person name="Durbin R.M."/>
            <person name="Eyras E."/>
            <person name="Searle S.M."/>
            <person name="Cooper G.M."/>
            <person name="Batzoglou S."/>
            <person name="Brudno M."/>
            <person name="Sidow A."/>
            <person name="Stone E.A."/>
            <person name="Payseur B.A."/>
            <person name="Bourque G."/>
            <person name="Lopez-Otin C."/>
            <person name="Puente X.S."/>
            <person name="Chakrabarti K."/>
            <person name="Chatterji S."/>
            <person name="Dewey C."/>
            <person name="Pachter L."/>
            <person name="Bray N."/>
            <person name="Yap V.B."/>
            <person name="Caspi A."/>
            <person name="Tesler G."/>
            <person name="Pevzner P.A."/>
            <person name="Haussler D."/>
            <person name="Roskin K.M."/>
            <person name="Baertsch R."/>
            <person name="Clawson H."/>
            <person name="Furey T.S."/>
            <person name="Hinrichs A.S."/>
            <person name="Karolchik D."/>
            <person name="Kent W.J."/>
            <person name="Rosenbloom K.R."/>
            <person name="Trumbower H."/>
            <person name="Weirauch M."/>
            <person name="Cooper D.N."/>
            <person name="Stenson P.D."/>
            <person name="Ma B."/>
            <person name="Brent M."/>
            <person name="Arumugam M."/>
            <person name="Shteynberg D."/>
            <person name="Copley R.R."/>
            <person name="Taylor M.S."/>
            <person name="Riethman H."/>
            <person name="Mudunuri U."/>
            <person name="Peterson J."/>
            <person name="Guyer M."/>
            <person name="Felsenfeld A."/>
            <person name="Old S."/>
            <person name="Mockrin S."/>
            <person name="Collins F.S."/>
        </authorList>
    </citation>
    <scope>NUCLEOTIDE SEQUENCE [LARGE SCALE GENOMIC DNA]</scope>
    <source>
        <strain>Brown Norway</strain>
    </source>
</reference>
<reference key="2">
    <citation type="journal article" date="2004" name="Genome Res.">
        <title>The status, quality, and expansion of the NIH full-length cDNA project: the Mammalian Gene Collection (MGC).</title>
        <authorList>
            <consortium name="The MGC Project Team"/>
        </authorList>
    </citation>
    <scope>NUCLEOTIDE SEQUENCE [LARGE SCALE MRNA]</scope>
    <source>
        <tissue>Brain</tissue>
    </source>
</reference>
<organism>
    <name type="scientific">Rattus norvegicus</name>
    <name type="common">Rat</name>
    <dbReference type="NCBI Taxonomy" id="10116"/>
    <lineage>
        <taxon>Eukaryota</taxon>
        <taxon>Metazoa</taxon>
        <taxon>Chordata</taxon>
        <taxon>Craniata</taxon>
        <taxon>Vertebrata</taxon>
        <taxon>Euteleostomi</taxon>
        <taxon>Mammalia</taxon>
        <taxon>Eutheria</taxon>
        <taxon>Euarchontoglires</taxon>
        <taxon>Glires</taxon>
        <taxon>Rodentia</taxon>
        <taxon>Myomorpha</taxon>
        <taxon>Muroidea</taxon>
        <taxon>Muridae</taxon>
        <taxon>Murinae</taxon>
        <taxon>Rattus</taxon>
    </lineage>
</organism>
<evidence type="ECO:0000250" key="1"/>
<evidence type="ECO:0000250" key="2">
    <source>
        <dbReference type="UniProtKB" id="Q7TMJ8"/>
    </source>
</evidence>
<evidence type="ECO:0000250" key="3">
    <source>
        <dbReference type="UniProtKB" id="Q96FE7"/>
    </source>
</evidence>
<evidence type="ECO:0000255" key="4"/>
<evidence type="ECO:0000255" key="5">
    <source>
        <dbReference type="PROSITE-ProRule" id="PRU00121"/>
    </source>
</evidence>
<evidence type="ECO:0000256" key="6">
    <source>
        <dbReference type="SAM" id="MobiDB-lite"/>
    </source>
</evidence>
<evidence type="ECO:0000305" key="7"/>
<dbReference type="EMBL" id="AC094950">
    <property type="status" value="NOT_ANNOTATED_CDS"/>
    <property type="molecule type" value="Genomic_DNA"/>
</dbReference>
<dbReference type="EMBL" id="BC092208">
    <property type="protein sequence ID" value="AAH92208.1"/>
    <property type="status" value="ALT_SEQ"/>
    <property type="molecule type" value="mRNA"/>
</dbReference>
<dbReference type="RefSeq" id="NP_001017453.1">
    <property type="nucleotide sequence ID" value="NM_001017453.1"/>
</dbReference>
<dbReference type="RefSeq" id="NP_001382087.1">
    <property type="nucleotide sequence ID" value="NM_001395158.1"/>
</dbReference>
<dbReference type="RefSeq" id="XP_006251355.1">
    <property type="nucleotide sequence ID" value="XM_006251293.3"/>
</dbReference>
<dbReference type="FunCoup" id="Q56A20">
    <property type="interactions" value="261"/>
</dbReference>
<dbReference type="STRING" id="10116.ENSRNOP00000075179"/>
<dbReference type="PhosphoSitePlus" id="Q56A20"/>
<dbReference type="PaxDb" id="10116-ENSRNOP00000054550"/>
<dbReference type="Ensembl" id="ENSRNOT00000057738.5">
    <property type="protein sequence ID" value="ENSRNOP00000054550.5"/>
    <property type="gene ID" value="ENSRNOG00000018859.8"/>
</dbReference>
<dbReference type="GeneID" id="305472"/>
<dbReference type="UCSC" id="RGD:1311203">
    <property type="organism name" value="rat"/>
</dbReference>
<dbReference type="AGR" id="RGD:1311203"/>
<dbReference type="RGD" id="1311203">
    <property type="gene designation" value="Pik3ip1"/>
</dbReference>
<dbReference type="eggNOG" id="ENOG502QTWD">
    <property type="taxonomic scope" value="Eukaryota"/>
</dbReference>
<dbReference type="GeneTree" id="ENSGT00390000017774"/>
<dbReference type="InParanoid" id="Q56A20"/>
<dbReference type="OrthoDB" id="9893972at2759"/>
<dbReference type="PhylomeDB" id="Q56A20"/>
<dbReference type="PRO" id="PR:Q56A20"/>
<dbReference type="Proteomes" id="UP000002494">
    <property type="component" value="Chromosome 14"/>
</dbReference>
<dbReference type="GO" id="GO:0005615">
    <property type="term" value="C:extracellular space"/>
    <property type="evidence" value="ECO:0000318"/>
    <property type="project" value="GO_Central"/>
</dbReference>
<dbReference type="GO" id="GO:0005886">
    <property type="term" value="C:plasma membrane"/>
    <property type="evidence" value="ECO:0007669"/>
    <property type="project" value="UniProtKB-SubCell"/>
</dbReference>
<dbReference type="GO" id="GO:0004175">
    <property type="term" value="F:endopeptidase activity"/>
    <property type="evidence" value="ECO:0000318"/>
    <property type="project" value="GO_Central"/>
</dbReference>
<dbReference type="GO" id="GO:0141039">
    <property type="term" value="F:phosphatidylinositol 3-kinase inhibitor activity"/>
    <property type="evidence" value="ECO:0000250"/>
    <property type="project" value="UniProtKB"/>
</dbReference>
<dbReference type="GO" id="GO:0005102">
    <property type="term" value="F:signaling receptor binding"/>
    <property type="evidence" value="ECO:0000318"/>
    <property type="project" value="GO_Central"/>
</dbReference>
<dbReference type="GO" id="GO:0051898">
    <property type="term" value="P:negative regulation of phosphatidylinositol 3-kinase/protein kinase B signal transduction"/>
    <property type="evidence" value="ECO:0000266"/>
    <property type="project" value="RGD"/>
</dbReference>
<dbReference type="CDD" id="cd00108">
    <property type="entry name" value="KR"/>
    <property type="match status" value="1"/>
</dbReference>
<dbReference type="FunFam" id="2.40.20.10:FF:000012">
    <property type="entry name" value="Phosphoinositide-3-kinase-interacting protein 1"/>
    <property type="match status" value="1"/>
</dbReference>
<dbReference type="Gene3D" id="2.40.20.10">
    <property type="entry name" value="Plasminogen Kringle 4"/>
    <property type="match status" value="1"/>
</dbReference>
<dbReference type="InterPro" id="IPR000001">
    <property type="entry name" value="Kringle"/>
</dbReference>
<dbReference type="InterPro" id="IPR013806">
    <property type="entry name" value="Kringle-like"/>
</dbReference>
<dbReference type="InterPro" id="IPR018056">
    <property type="entry name" value="Kringle_CS"/>
</dbReference>
<dbReference type="InterPro" id="IPR038178">
    <property type="entry name" value="Kringle_sf"/>
</dbReference>
<dbReference type="Pfam" id="PF00051">
    <property type="entry name" value="Kringle"/>
    <property type="match status" value="1"/>
</dbReference>
<dbReference type="SMART" id="SM00130">
    <property type="entry name" value="KR"/>
    <property type="match status" value="1"/>
</dbReference>
<dbReference type="SUPFAM" id="SSF57440">
    <property type="entry name" value="Kringle-like"/>
    <property type="match status" value="1"/>
</dbReference>
<dbReference type="PROSITE" id="PS00021">
    <property type="entry name" value="KRINGLE_1"/>
    <property type="match status" value="1"/>
</dbReference>
<dbReference type="PROSITE" id="PS50070">
    <property type="entry name" value="KRINGLE_2"/>
    <property type="match status" value="1"/>
</dbReference>
<comment type="function">
    <text evidence="2">Negative regulator of hepatic phosphatidylinositol 3-kinase (PI3K) activity.</text>
</comment>
<comment type="subcellular location">
    <subcellularLocation>
        <location evidence="3">Cell membrane</location>
        <topology evidence="4">Single-pass type I membrane protein</topology>
    </subcellularLocation>
</comment>
<comment type="sequence caution" evidence="7">
    <conflict type="miscellaneous discrepancy">
        <sequence resource="EMBL-CDS" id="AAH92208"/>
    </conflict>
    <text>Probable cloning artifact.</text>
</comment>
<sequence length="267" mass="29101">MLLAWVHTFLLSNMLLAEAYGSGGCFWDNGHLYREDQPSPAPGLRCLNWLAAQGSGESLAQPSPGNHNYCRNPDQDPRGPWCYISSETGVPEKRPCEDLRCPETTSQAPPPPPPSSTTELEEKFGVPGDKETQVFPPANALPARSEAAEVQPVIGISQRVRMNSKEKKDLGTLGYVLGVTMTVIIIAIGVGIVLGYTYKRGKDLKEQHEQKVCEREMQRITLPLSAFTNPTCEIMDEKTIIVHSNQTPADVQEGSTLLTDQAGTPGA</sequence>
<gene>
    <name type="primary">Pik3ip1</name>
    <name type="synonym">Hgfl</name>
</gene>
<keyword id="KW-1003">Cell membrane</keyword>
<keyword id="KW-1015">Disulfide bond</keyword>
<keyword id="KW-0420">Kringle</keyword>
<keyword id="KW-0472">Membrane</keyword>
<keyword id="KW-1185">Reference proteome</keyword>
<keyword id="KW-0732">Signal</keyword>
<keyword id="KW-0812">Transmembrane</keyword>
<keyword id="KW-1133">Transmembrane helix</keyword>